<sequence length="1015" mass="111471">MAHIYRLLLLLLSNLWFSAAAQNQSETEWPLHDNGLSKVVQWDHYSFQVNGQRIFIFSGEFHYWRIPVPELWRDILEKVKATGFTAFAFYSSWAYHAPNNRTVDFSTGARDITPIFELAKELGMYMIVRPGPYVNAEASAGGFPLWLTTGEYGSLRNDDPRYTAAWTPYFANMSQITSKYQVTDGHNTLVYQIENEYGQQWIGDPKDRNPNKTAVAYMELLEASALENGITVPLTSNDPNMNSKSWGSDWSNAGGNVDVAGLDSYPSCWTCDVSQCTSTNGEYVPYKVIDYYDYFQEVQPTLPSFMPEFQGGSYNPWAGPEGGCPQDTGAEFANLFYRWNIGQRVTAMSLYMLYGGTNWGAIAAPVTATSYDYSAPISEDRSIGAKYSETKLLALFTRTAKDLTMTEAIGNGTQYTTNTAVRAFELRNPQTNAGFYVTFHNDTTVGGNQAFKLHVNTSVGALTVPKNEGVIQLNGHQSKIIVTDFTLGKRTLLYSTAEVLTYAVFENRPTLVLWVPTGESGEFAIKGTKSGKVENGDGCSGINFKREKDYLVVNFSQAKGLSVLRLDNGVRVVLLDKAAAYRFWAPALTDDPIVQETETVLVHGPYLVRSASVSKSTLALRGDSVEKTTLEIFAPHSVRKITWNGKEVKTSQTPYGSLKATLAAPPTIKLPALTSWRSNDSLPERLPSYDDSGPAWIEANHMTTSNPSPPATLPVLYADEYGFHNGVRLWRGYFNGSASGVFLNIQGGSAFGWSAWLNGHFLDSHLGTATTSQANKTLTFSSSILNPTENVLLIVHDDTGHDQTTGALNPRGIIEARLLSNDTSSPAPGFTQWRIAGTAGGESNLDPIRGVFNEDGLFAERMGWHLPGFDDSAWTPENSTTSASSALSFTGATVRFFRTVVPLDIPAGLDVSISFVLSTPSAAPKGYRAQLFVNGYQYGRYNPHIGNQVVFPVPPGILDYQGDNTIGLAVWAQTEEGAGIQVDWKVNYVADSSLSVAGFGKGLRPGWTEERLKFA</sequence>
<keyword id="KW-0119">Carbohydrate metabolism</keyword>
<keyword id="KW-1015">Disulfide bond</keyword>
<keyword id="KW-0325">Glycoprotein</keyword>
<keyword id="KW-0326">Glycosidase</keyword>
<keyword id="KW-0378">Hydrolase</keyword>
<keyword id="KW-0624">Polysaccharide degradation</keyword>
<keyword id="KW-1185">Reference proteome</keyword>
<keyword id="KW-0964">Secreted</keyword>
<keyword id="KW-0732">Signal</keyword>
<feature type="signal peptide" evidence="2">
    <location>
        <begin position="1"/>
        <end position="21"/>
    </location>
</feature>
<feature type="chain" id="PRO_0000395230" description="Probable beta-galactosidase B">
    <location>
        <begin position="22"/>
        <end position="1015"/>
    </location>
</feature>
<feature type="active site" description="Proton donor" evidence="2">
    <location>
        <position position="196"/>
    </location>
</feature>
<feature type="active site" description="Nucleophile" evidence="2">
    <location>
        <position position="308"/>
    </location>
</feature>
<feature type="binding site" evidence="1">
    <location>
        <position position="90"/>
    </location>
    <ligand>
        <name>substrate</name>
    </ligand>
</feature>
<feature type="binding site" evidence="1">
    <location>
        <position position="135"/>
    </location>
    <ligand>
        <name>substrate</name>
    </ligand>
</feature>
<feature type="binding site" evidence="1">
    <location>
        <position position="136"/>
    </location>
    <ligand>
        <name>substrate</name>
    </ligand>
</feature>
<feature type="binding site" evidence="1">
    <location>
        <position position="137"/>
    </location>
    <ligand>
        <name>substrate</name>
    </ligand>
</feature>
<feature type="binding site" evidence="1">
    <location>
        <position position="195"/>
    </location>
    <ligand>
        <name>substrate</name>
    </ligand>
</feature>
<feature type="binding site" evidence="1">
    <location>
        <position position="265"/>
    </location>
    <ligand>
        <name>substrate</name>
    </ligand>
</feature>
<feature type="binding site" evidence="1">
    <location>
        <position position="373"/>
    </location>
    <ligand>
        <name>substrate</name>
    </ligand>
</feature>
<feature type="glycosylation site" description="N-linked (GlcNAc...) asparagine" evidence="2">
    <location>
        <position position="23"/>
    </location>
</feature>
<feature type="glycosylation site" description="N-linked (GlcNAc...) asparagine" evidence="2">
    <location>
        <position position="100"/>
    </location>
</feature>
<feature type="glycosylation site" description="N-linked (GlcNAc...) asparagine" evidence="2">
    <location>
        <position position="172"/>
    </location>
</feature>
<feature type="glycosylation site" description="N-linked (GlcNAc...) asparagine" evidence="2">
    <location>
        <position position="211"/>
    </location>
</feature>
<feature type="glycosylation site" description="N-linked (GlcNAc...) asparagine" evidence="2">
    <location>
        <position position="411"/>
    </location>
</feature>
<feature type="glycosylation site" description="N-linked (GlcNAc...) asparagine" evidence="2">
    <location>
        <position position="441"/>
    </location>
</feature>
<feature type="glycosylation site" description="N-linked (GlcNAc...) asparagine" evidence="2">
    <location>
        <position position="456"/>
    </location>
</feature>
<feature type="glycosylation site" description="N-linked (GlcNAc...) asparagine" evidence="2">
    <location>
        <position position="554"/>
    </location>
</feature>
<feature type="glycosylation site" description="N-linked (GlcNAc...) asparagine" evidence="2">
    <location>
        <position position="679"/>
    </location>
</feature>
<feature type="glycosylation site" description="N-linked (GlcNAc...) asparagine" evidence="2">
    <location>
        <position position="735"/>
    </location>
</feature>
<feature type="glycosylation site" description="N-linked (GlcNAc...) asparagine" evidence="2">
    <location>
        <position position="775"/>
    </location>
</feature>
<feature type="glycosylation site" description="N-linked (GlcNAc...) asparagine" evidence="2">
    <location>
        <position position="821"/>
    </location>
</feature>
<feature type="glycosylation site" description="N-linked (GlcNAc...) asparagine" evidence="2">
    <location>
        <position position="878"/>
    </location>
</feature>
<feature type="disulfide bond" evidence="1">
    <location>
        <begin position="271"/>
        <end position="324"/>
    </location>
</feature>
<evidence type="ECO:0000250" key="1"/>
<evidence type="ECO:0000255" key="2"/>
<evidence type="ECO:0000305" key="3"/>
<protein>
    <recommendedName>
        <fullName>Probable beta-galactosidase B</fullName>
        <ecNumber>3.2.1.23</ecNumber>
    </recommendedName>
    <alternativeName>
        <fullName>Lactase B</fullName>
    </alternativeName>
</protein>
<comment type="function">
    <text evidence="1">Cleaves beta-linked terminal galactosyl residues from gangliosides, glycoproteins, and glycosaminoglycans.</text>
</comment>
<comment type="catalytic activity">
    <reaction>
        <text>Hydrolysis of terminal non-reducing beta-D-galactose residues in beta-D-galactosides.</text>
        <dbReference type="EC" id="3.2.1.23"/>
    </reaction>
</comment>
<comment type="subcellular location">
    <subcellularLocation>
        <location evidence="1">Secreted</location>
    </subcellularLocation>
</comment>
<comment type="similarity">
    <text evidence="3">Belongs to the glycosyl hydrolase 35 family.</text>
</comment>
<gene>
    <name type="primary">lacB</name>
    <name type="ORF">NFIA_008690</name>
</gene>
<reference key="1">
    <citation type="journal article" date="2008" name="PLoS Genet.">
        <title>Genomic islands in the pathogenic filamentous fungus Aspergillus fumigatus.</title>
        <authorList>
            <person name="Fedorova N.D."/>
            <person name="Khaldi N."/>
            <person name="Joardar V.S."/>
            <person name="Maiti R."/>
            <person name="Amedeo P."/>
            <person name="Anderson M.J."/>
            <person name="Crabtree J."/>
            <person name="Silva J.C."/>
            <person name="Badger J.H."/>
            <person name="Albarraq A."/>
            <person name="Angiuoli S."/>
            <person name="Bussey H."/>
            <person name="Bowyer P."/>
            <person name="Cotty P.J."/>
            <person name="Dyer P.S."/>
            <person name="Egan A."/>
            <person name="Galens K."/>
            <person name="Fraser-Liggett C.M."/>
            <person name="Haas B.J."/>
            <person name="Inman J.M."/>
            <person name="Kent R."/>
            <person name="Lemieux S."/>
            <person name="Malavazi I."/>
            <person name="Orvis J."/>
            <person name="Roemer T."/>
            <person name="Ronning C.M."/>
            <person name="Sundaram J.P."/>
            <person name="Sutton G."/>
            <person name="Turner G."/>
            <person name="Venter J.C."/>
            <person name="White O.R."/>
            <person name="Whitty B.R."/>
            <person name="Youngman P."/>
            <person name="Wolfe K.H."/>
            <person name="Goldman G.H."/>
            <person name="Wortman J.R."/>
            <person name="Jiang B."/>
            <person name="Denning D.W."/>
            <person name="Nierman W.C."/>
        </authorList>
    </citation>
    <scope>NUCLEOTIDE SEQUENCE [LARGE SCALE GENOMIC DNA]</scope>
    <source>
        <strain>ATCC 1020 / DSM 3700 / CBS 544.65 / FGSC A1164 / JCM 1740 / NRRL 181 / WB 181</strain>
    </source>
</reference>
<proteinExistence type="inferred from homology"/>
<accession>A1D199</accession>
<dbReference type="EC" id="3.2.1.23"/>
<dbReference type="EMBL" id="DS027688">
    <property type="protein sequence ID" value="EAW22192.1"/>
    <property type="molecule type" value="Genomic_DNA"/>
</dbReference>
<dbReference type="RefSeq" id="XP_001264089.1">
    <property type="nucleotide sequence ID" value="XM_001264088.1"/>
</dbReference>
<dbReference type="SMR" id="A1D199"/>
<dbReference type="STRING" id="331117.A1D199"/>
<dbReference type="GlyCosmos" id="A1D199">
    <property type="glycosylation" value="13 sites, No reported glycans"/>
</dbReference>
<dbReference type="EnsemblFungi" id="EAW22192">
    <property type="protein sequence ID" value="EAW22192"/>
    <property type="gene ID" value="NFIA_008690"/>
</dbReference>
<dbReference type="GeneID" id="4591479"/>
<dbReference type="KEGG" id="nfi:NFIA_008690"/>
<dbReference type="VEuPathDB" id="FungiDB:NFIA_008690"/>
<dbReference type="eggNOG" id="KOG0496">
    <property type="taxonomic scope" value="Eukaryota"/>
</dbReference>
<dbReference type="HOGENOM" id="CLU_005732_2_1_1"/>
<dbReference type="OMA" id="GGCPGDI"/>
<dbReference type="OrthoDB" id="1657402at2759"/>
<dbReference type="Proteomes" id="UP000006702">
    <property type="component" value="Unassembled WGS sequence"/>
</dbReference>
<dbReference type="GO" id="GO:0005576">
    <property type="term" value="C:extracellular region"/>
    <property type="evidence" value="ECO:0007669"/>
    <property type="project" value="UniProtKB-SubCell"/>
</dbReference>
<dbReference type="GO" id="GO:0004565">
    <property type="term" value="F:beta-galactosidase activity"/>
    <property type="evidence" value="ECO:0007669"/>
    <property type="project" value="UniProtKB-EC"/>
</dbReference>
<dbReference type="GO" id="GO:0000272">
    <property type="term" value="P:polysaccharide catabolic process"/>
    <property type="evidence" value="ECO:0007669"/>
    <property type="project" value="UniProtKB-KW"/>
</dbReference>
<dbReference type="FunFam" id="2.102.20.10:FF:000001">
    <property type="entry name" value="Beta-galactosidase A"/>
    <property type="match status" value="1"/>
</dbReference>
<dbReference type="FunFam" id="2.60.390.10:FF:000001">
    <property type="entry name" value="Beta-galactosidase A"/>
    <property type="match status" value="1"/>
</dbReference>
<dbReference type="FunFam" id="3.20.20.80:FF:000040">
    <property type="entry name" value="Beta-galactosidase A"/>
    <property type="match status" value="1"/>
</dbReference>
<dbReference type="FunFam" id="2.60.120.260:FF:000138">
    <property type="entry name" value="Probable beta-galactosidase B"/>
    <property type="match status" value="1"/>
</dbReference>
<dbReference type="Gene3D" id="2.102.20.10">
    <property type="entry name" value="Beta-galactosidase, domain 2"/>
    <property type="match status" value="1"/>
</dbReference>
<dbReference type="Gene3D" id="2.60.390.10">
    <property type="entry name" value="Beta-galactosidase, domain 3"/>
    <property type="match status" value="1"/>
</dbReference>
<dbReference type="Gene3D" id="2.60.120.260">
    <property type="entry name" value="Galactose-binding domain-like"/>
    <property type="match status" value="2"/>
</dbReference>
<dbReference type="Gene3D" id="3.20.20.80">
    <property type="entry name" value="Glycosidases"/>
    <property type="match status" value="1"/>
</dbReference>
<dbReference type="InterPro" id="IPR018954">
    <property type="entry name" value="Betagal_dom2"/>
</dbReference>
<dbReference type="InterPro" id="IPR037110">
    <property type="entry name" value="Betagal_dom2_sf"/>
</dbReference>
<dbReference type="InterPro" id="IPR025972">
    <property type="entry name" value="BetaGal_dom3"/>
</dbReference>
<dbReference type="InterPro" id="IPR036833">
    <property type="entry name" value="BetaGal_dom3_sf"/>
</dbReference>
<dbReference type="InterPro" id="IPR025300">
    <property type="entry name" value="BetaGal_jelly_roll_dom"/>
</dbReference>
<dbReference type="InterPro" id="IPR008979">
    <property type="entry name" value="Galactose-bd-like_sf"/>
</dbReference>
<dbReference type="InterPro" id="IPR031330">
    <property type="entry name" value="Gly_Hdrlase_35_cat"/>
</dbReference>
<dbReference type="InterPro" id="IPR001944">
    <property type="entry name" value="Glycoside_Hdrlase_35"/>
</dbReference>
<dbReference type="InterPro" id="IPR017853">
    <property type="entry name" value="Glycoside_hydrolase_SF"/>
</dbReference>
<dbReference type="PANTHER" id="PTHR23421">
    <property type="entry name" value="BETA-GALACTOSIDASE RELATED"/>
    <property type="match status" value="1"/>
</dbReference>
<dbReference type="Pfam" id="PF13364">
    <property type="entry name" value="BetaGal_ABD2"/>
    <property type="match status" value="2"/>
</dbReference>
<dbReference type="Pfam" id="PF10435">
    <property type="entry name" value="BetaGal_dom2"/>
    <property type="match status" value="1"/>
</dbReference>
<dbReference type="Pfam" id="PF13363">
    <property type="entry name" value="BetaGal_dom3"/>
    <property type="match status" value="1"/>
</dbReference>
<dbReference type="Pfam" id="PF01301">
    <property type="entry name" value="Glyco_hydro_35"/>
    <property type="match status" value="1"/>
</dbReference>
<dbReference type="PRINTS" id="PR00742">
    <property type="entry name" value="GLHYDRLASE35"/>
</dbReference>
<dbReference type="SMART" id="SM01029">
    <property type="entry name" value="BetaGal_dom2"/>
    <property type="match status" value="1"/>
</dbReference>
<dbReference type="SUPFAM" id="SSF51445">
    <property type="entry name" value="(Trans)glycosidases"/>
    <property type="match status" value="1"/>
</dbReference>
<dbReference type="SUPFAM" id="SSF117100">
    <property type="entry name" value="Beta-galactosidase LacA, domain 3"/>
    <property type="match status" value="1"/>
</dbReference>
<dbReference type="SUPFAM" id="SSF49785">
    <property type="entry name" value="Galactose-binding domain-like"/>
    <property type="match status" value="2"/>
</dbReference>
<dbReference type="SUPFAM" id="SSF51011">
    <property type="entry name" value="Glycosyl hydrolase domain"/>
    <property type="match status" value="1"/>
</dbReference>
<name>BGALB_NEOFI</name>
<organism>
    <name type="scientific">Neosartorya fischeri (strain ATCC 1020 / DSM 3700 / CBS 544.65 / FGSC A1164 / JCM 1740 / NRRL 181 / WB 181)</name>
    <name type="common">Aspergillus fischerianus</name>
    <dbReference type="NCBI Taxonomy" id="331117"/>
    <lineage>
        <taxon>Eukaryota</taxon>
        <taxon>Fungi</taxon>
        <taxon>Dikarya</taxon>
        <taxon>Ascomycota</taxon>
        <taxon>Pezizomycotina</taxon>
        <taxon>Eurotiomycetes</taxon>
        <taxon>Eurotiomycetidae</taxon>
        <taxon>Eurotiales</taxon>
        <taxon>Aspergillaceae</taxon>
        <taxon>Aspergillus</taxon>
        <taxon>Aspergillus subgen. Fumigati</taxon>
    </lineage>
</organism>